<name>MSHR_CEREL</name>
<gene>
    <name type="primary">MC1R</name>
    <name type="synonym">MSHR</name>
</gene>
<comment type="function">
    <text evidence="1">Receptor for MSH (alpha, beta and gamma) and ACTH. The activity of this receptor is mediated by G proteins which activate adenylate cyclase. Mediates melanogenesis, the production of eumelanin (black/brown) and phaeomelanin (red/yellow), via regulation of cAMP signaling in melanocytes.</text>
</comment>
<comment type="subunit">
    <text evidence="1">Interacts with MGRN1, but does not undergo MGRN1-mediated ubiquitination; this interaction competes with GNAS-binding and thus inhibits agonist-induced cAMP production. Interacts with OPN3; the interaction results in a decrease in MC1R-mediated cAMP signaling and ultimately a decrease in melanin production in melanocytes.</text>
</comment>
<comment type="subcellular location">
    <subcellularLocation>
        <location evidence="1">Cell membrane</location>
        <topology evidence="2">Multi-pass membrane protein</topology>
    </subcellularLocation>
</comment>
<comment type="similarity">
    <text evidence="3">Belongs to the G-protein coupled receptor 1 family.</text>
</comment>
<sequence>MPVLGSQRRLLGSLNCTPPATFPLTLAPNRTGPQCLEVAIPDGLFLSLGLVSLVENVLVVAAIAKNRNLQSPMYYFICCLAMSDLLVSVSNVLETAVMLLLEAGALAARAAVVQQLDNVIDVLICGSMVSSLCFLGAIAVDRYISIFYALRYHSVVTLPRAWRIIAAIWVASILTSLLFITYYNHTVVLLCLVGFFIAMLALMAVLYVHMLARACQHARGIARLQKRQRPIHQGFGLKGAATLTILLGVFFLCWGPFFLHLSLIVLCPQHPTCGCIFKNFNLFLALIICNAIVDPLIYAFRSQELRKTLQEVLQCSW</sequence>
<dbReference type="EMBL" id="Y13962">
    <property type="protein sequence ID" value="CAA74296.1"/>
    <property type="molecule type" value="Genomic_DNA"/>
</dbReference>
<dbReference type="SMR" id="P56445"/>
<dbReference type="GlyCosmos" id="P56445">
    <property type="glycosylation" value="1 site, No reported glycans"/>
</dbReference>
<dbReference type="GO" id="GO:0005886">
    <property type="term" value="C:plasma membrane"/>
    <property type="evidence" value="ECO:0000250"/>
    <property type="project" value="UniProtKB"/>
</dbReference>
<dbReference type="GO" id="GO:0004980">
    <property type="term" value="F:melanocyte-stimulating hormone receptor activity"/>
    <property type="evidence" value="ECO:0007669"/>
    <property type="project" value="InterPro"/>
</dbReference>
<dbReference type="CDD" id="cd15351">
    <property type="entry name" value="7tmA_MC1R"/>
    <property type="match status" value="1"/>
</dbReference>
<dbReference type="FunFam" id="1.20.1070.10:FF:000211">
    <property type="entry name" value="Melanocyte-stimulating hormone receptor"/>
    <property type="match status" value="1"/>
</dbReference>
<dbReference type="Gene3D" id="1.20.1070.10">
    <property type="entry name" value="Rhodopsin 7-helix transmembrane proteins"/>
    <property type="match status" value="1"/>
</dbReference>
<dbReference type="InterPro" id="IPR000276">
    <property type="entry name" value="GPCR_Rhodpsn"/>
</dbReference>
<dbReference type="InterPro" id="IPR017452">
    <property type="entry name" value="GPCR_Rhodpsn_7TM"/>
</dbReference>
<dbReference type="InterPro" id="IPR001671">
    <property type="entry name" value="Melcrt_ACTH_rcpt"/>
</dbReference>
<dbReference type="InterPro" id="IPR000761">
    <property type="entry name" value="MSH_rcpt"/>
</dbReference>
<dbReference type="PANTHER" id="PTHR22750">
    <property type="entry name" value="G-PROTEIN COUPLED RECEPTOR"/>
    <property type="match status" value="1"/>
</dbReference>
<dbReference type="Pfam" id="PF00001">
    <property type="entry name" value="7tm_1"/>
    <property type="match status" value="1"/>
</dbReference>
<dbReference type="PRINTS" id="PR00237">
    <property type="entry name" value="GPCRRHODOPSN"/>
</dbReference>
<dbReference type="PRINTS" id="PR00534">
    <property type="entry name" value="MCRFAMILY"/>
</dbReference>
<dbReference type="PRINTS" id="PR00536">
    <property type="entry name" value="MELNOCYTESHR"/>
</dbReference>
<dbReference type="SMART" id="SM01381">
    <property type="entry name" value="7TM_GPCR_Srsx"/>
    <property type="match status" value="1"/>
</dbReference>
<dbReference type="SUPFAM" id="SSF81321">
    <property type="entry name" value="Family A G protein-coupled receptor-like"/>
    <property type="match status" value="1"/>
</dbReference>
<dbReference type="PROSITE" id="PS00237">
    <property type="entry name" value="G_PROTEIN_RECEP_F1_1"/>
    <property type="match status" value="1"/>
</dbReference>
<dbReference type="PROSITE" id="PS50262">
    <property type="entry name" value="G_PROTEIN_RECEP_F1_2"/>
    <property type="match status" value="1"/>
</dbReference>
<evidence type="ECO:0000250" key="1">
    <source>
        <dbReference type="UniProtKB" id="Q01726"/>
    </source>
</evidence>
<evidence type="ECO:0000255" key="2"/>
<evidence type="ECO:0000255" key="3">
    <source>
        <dbReference type="PROSITE-ProRule" id="PRU00521"/>
    </source>
</evidence>
<feature type="chain" id="PRO_0000069805" description="Melanocyte-stimulating hormone receptor">
    <location>
        <begin position="1"/>
        <end position="317"/>
    </location>
</feature>
<feature type="topological domain" description="Extracellular" evidence="2">
    <location>
        <begin position="1"/>
        <end position="37"/>
    </location>
</feature>
<feature type="transmembrane region" description="Helical; Name=1" evidence="2">
    <location>
        <begin position="38"/>
        <end position="63"/>
    </location>
</feature>
<feature type="topological domain" description="Cytoplasmic" evidence="2">
    <location>
        <begin position="64"/>
        <end position="72"/>
    </location>
</feature>
<feature type="transmembrane region" description="Helical; Name=2" evidence="2">
    <location>
        <begin position="73"/>
        <end position="93"/>
    </location>
</feature>
<feature type="topological domain" description="Extracellular" evidence="2">
    <location>
        <begin position="94"/>
        <end position="118"/>
    </location>
</feature>
<feature type="transmembrane region" description="Helical; Name=3" evidence="2">
    <location>
        <begin position="119"/>
        <end position="140"/>
    </location>
</feature>
<feature type="topological domain" description="Cytoplasmic" evidence="2">
    <location>
        <begin position="141"/>
        <end position="163"/>
    </location>
</feature>
<feature type="transmembrane region" description="Helical; Name=4" evidence="2">
    <location>
        <begin position="164"/>
        <end position="183"/>
    </location>
</feature>
<feature type="topological domain" description="Extracellular" evidence="2">
    <location>
        <begin position="184"/>
        <end position="191"/>
    </location>
</feature>
<feature type="transmembrane region" description="Helical; Name=5" evidence="2">
    <location>
        <begin position="192"/>
        <end position="211"/>
    </location>
</feature>
<feature type="topological domain" description="Cytoplasmic" evidence="2">
    <location>
        <begin position="212"/>
        <end position="240"/>
    </location>
</feature>
<feature type="transmembrane region" description="Helical; Name=6" evidence="2">
    <location>
        <begin position="241"/>
        <end position="266"/>
    </location>
</feature>
<feature type="topological domain" description="Extracellular" evidence="2">
    <location>
        <begin position="267"/>
        <end position="279"/>
    </location>
</feature>
<feature type="transmembrane region" description="Helical; Name=7" evidence="2">
    <location>
        <begin position="280"/>
        <end position="300"/>
    </location>
</feature>
<feature type="topological domain" description="Cytoplasmic" evidence="2">
    <location>
        <begin position="301"/>
        <end position="317"/>
    </location>
</feature>
<feature type="lipid moiety-binding region" description="S-palmitoyl cysteine" evidence="2">
    <location>
        <position position="315"/>
    </location>
</feature>
<feature type="glycosylation site" description="N-linked (GlcNAc...) asparagine" evidence="2">
    <location>
        <position position="29"/>
    </location>
</feature>
<proteinExistence type="inferred from homology"/>
<reference key="1">
    <citation type="journal article" date="1999" name="Hereditas">
        <title>The melanocyte-stimulating hormone receptor (MC1-R) gene as a tool in evolutionary studies of artiodactyles.</title>
        <authorList>
            <person name="Klungland H."/>
            <person name="Roed K.H."/>
            <person name="Nesbo C.L."/>
            <person name="Jakobsen K.S."/>
            <person name="Vage D.I."/>
        </authorList>
    </citation>
    <scope>NUCLEOTIDE SEQUENCE [GENOMIC DNA]</scope>
</reference>
<organism>
    <name type="scientific">Cervus elaphus</name>
    <name type="common">Red deer</name>
    <dbReference type="NCBI Taxonomy" id="9860"/>
    <lineage>
        <taxon>Eukaryota</taxon>
        <taxon>Metazoa</taxon>
        <taxon>Chordata</taxon>
        <taxon>Craniata</taxon>
        <taxon>Vertebrata</taxon>
        <taxon>Euteleostomi</taxon>
        <taxon>Mammalia</taxon>
        <taxon>Eutheria</taxon>
        <taxon>Laurasiatheria</taxon>
        <taxon>Artiodactyla</taxon>
        <taxon>Ruminantia</taxon>
        <taxon>Pecora</taxon>
        <taxon>Cervidae</taxon>
        <taxon>Cervinae</taxon>
        <taxon>Cervus</taxon>
    </lineage>
</organism>
<accession>P56445</accession>
<protein>
    <recommendedName>
        <fullName>Melanocyte-stimulating hormone receptor</fullName>
        <shortName>MSH-R</shortName>
    </recommendedName>
    <alternativeName>
        <fullName>Melanocortin receptor 1</fullName>
        <shortName>MC1-R</shortName>
    </alternativeName>
</protein>
<keyword id="KW-1003">Cell membrane</keyword>
<keyword id="KW-0297">G-protein coupled receptor</keyword>
<keyword id="KW-0325">Glycoprotein</keyword>
<keyword id="KW-0449">Lipoprotein</keyword>
<keyword id="KW-0472">Membrane</keyword>
<keyword id="KW-0564">Palmitate</keyword>
<keyword id="KW-0675">Receptor</keyword>
<keyword id="KW-0807">Transducer</keyword>
<keyword id="KW-0812">Transmembrane</keyword>
<keyword id="KW-1133">Transmembrane helix</keyword>